<accession>Q70DU8</accession>
<accession>A8MQF0</accession>
<accession>Q8LFT7</accession>
<accession>Q9C6Y7</accession>
<comment type="function">
    <text evidence="5">Involved in oxidative stress tolerance by detoxifying reactive aldehydes derived from lipid peroxidation. Medium- to long-chain saturated aldehydes are preferred substrates, while the short-chain aldehyde propanal is a weak substrate. Is strictely NAD(+) specific.</text>
</comment>
<comment type="catalytic activity">
    <reaction evidence="5">
        <text>an aldehyde + NAD(+) + H2O = a carboxylate + NADH + 2 H(+)</text>
        <dbReference type="Rhea" id="RHEA:16185"/>
        <dbReference type="ChEBI" id="CHEBI:15377"/>
        <dbReference type="ChEBI" id="CHEBI:15378"/>
        <dbReference type="ChEBI" id="CHEBI:17478"/>
        <dbReference type="ChEBI" id="CHEBI:29067"/>
        <dbReference type="ChEBI" id="CHEBI:57540"/>
        <dbReference type="ChEBI" id="CHEBI:57945"/>
        <dbReference type="EC" id="1.2.1.3"/>
    </reaction>
</comment>
<comment type="activity regulation">
    <text evidence="5">Thiol-based regulation. Inactivation after dimerization under oxidizing conditions.</text>
</comment>
<comment type="biophysicochemical properties">
    <kinetics>
        <KM evidence="5">510 uM for propionaldehyde</KM>
        <KM evidence="5">71 uM for hexanal</KM>
        <KM evidence="5">29 uM for octanal</KM>
        <KM evidence="5">8 uM for nonanal</KM>
        <KM evidence="5">5 uM for dodecanal</KM>
        <KM evidence="5">180 uM for trans-2-hexenal</KM>
        <KM evidence="5">3 uM for trans-2-nonenal</KM>
        <KM evidence="5">40.3 uM for 4-hydroxynonenal</KM>
        <KM evidence="5">421 uM for NAD(+) (in the presence of hexanal as co-substrate)</KM>
        <KM evidence="5">119 uM for NAD(+) (in the presence of trans-2-nonenal as co-substrate)</KM>
        <Vmax evidence="5">7.3 umol/min/mg enzyme with propionaldehyde as substrate</Vmax>
        <Vmax evidence="5">12.0 umol/min/mg enzyme with hexanal as substrate</Vmax>
        <Vmax evidence="5">18.0 umol/min/mg enzyme with octanal as substrate</Vmax>
        <Vmax evidence="5">19.2 umol/min/mg enzyme with nonanal as substrate</Vmax>
        <Vmax evidence="5">23.9 umol/min/mg enzyme with dodecanal as substrate</Vmax>
        <Vmax evidence="5">2.4 umol/min/mg enzyme with trans-2-hexenal as substrate</Vmax>
        <Vmax evidence="5">2.9 umol/min/mg enzyme with trans-2-nonenal as substrate</Vmax>
        <Vmax evidence="5">1.4 umol/min/mg enzyme with 4-hydroxynonenal as substrate</Vmax>
    </kinetics>
    <phDependence>
        <text evidence="5">Optimum pH is 8.0.</text>
    </phDependence>
</comment>
<comment type="subunit">
    <text evidence="5">Homodimer and homomultimer.</text>
</comment>
<comment type="alternative products">
    <event type="alternative promoter"/>
    <event type="alternative splicing"/>
    <isoform>
        <id>Q70DU8-1</id>
        <name>alpha</name>
        <sequence type="displayed"/>
    </isoform>
    <isoform>
        <id>Q70DU8-2</id>
        <name>beta</name>
        <sequence type="described" ref="VSP_054869"/>
    </isoform>
    <text>A number of isoforms are produced. According to EST sequences. An alternative promoter within intron 1 may direct expression of several alternative transcripts, including isoform beta.</text>
</comment>
<comment type="tissue specificity">
    <text evidence="6">Isoform alpha is expressed in expanded leaves and flowers. Detected in seedlings. Isoform beta is mainly expressed in flowers. Detected in leaves and seedlings.</text>
</comment>
<comment type="induction">
    <text evidence="3 4 6">By abscisic acid (ABA), dehydration and salt stress in roots. Isoform alpha is up-regulated in leaves but not in roots upon salt treatment. Isoforn beta is up-regulated by salt treatment in both roots and leaves.</text>
</comment>
<comment type="disruption phenotype">
    <text evidence="6">Increased sensitivity to salt stress.</text>
</comment>
<comment type="miscellaneous">
    <molecule>Isoform alpha</molecule>
    <text>Major isoform.</text>
</comment>
<comment type="miscellaneous">
    <molecule>Isoform beta</molecule>
    <text evidence="8">Produced by alternative splicing. Maybe not translated into a protein or accumulates at a level below detection.</text>
</comment>
<comment type="similarity">
    <text evidence="8">Belongs to the aldehyde dehydrogenase family.</text>
</comment>
<evidence type="ECO:0000250" key="1"/>
<evidence type="ECO:0000255" key="2">
    <source>
        <dbReference type="PROSITE-ProRule" id="PRU10007"/>
    </source>
</evidence>
<evidence type="ECO:0000269" key="3">
    <source>
    </source>
</evidence>
<evidence type="ECO:0000269" key="4">
    <source>
    </source>
</evidence>
<evidence type="ECO:0000269" key="5">
    <source>
    </source>
</evidence>
<evidence type="ECO:0000269" key="6">
    <source>
    </source>
</evidence>
<evidence type="ECO:0000269" key="7">
    <source>
    </source>
</evidence>
<evidence type="ECO:0000305" key="8"/>
<keyword id="KW-0877">Alternative promoter usage</keyword>
<keyword id="KW-0025">Alternative splicing</keyword>
<keyword id="KW-1015">Disulfide bond</keyword>
<keyword id="KW-0520">NAD</keyword>
<keyword id="KW-0560">Oxidoreductase</keyword>
<keyword id="KW-1185">Reference proteome</keyword>
<keyword id="KW-0346">Stress response</keyword>
<organism>
    <name type="scientific">Arabidopsis thaliana</name>
    <name type="common">Mouse-ear cress</name>
    <dbReference type="NCBI Taxonomy" id="3702"/>
    <lineage>
        <taxon>Eukaryota</taxon>
        <taxon>Viridiplantae</taxon>
        <taxon>Streptophyta</taxon>
        <taxon>Embryophyta</taxon>
        <taxon>Tracheophyta</taxon>
        <taxon>Spermatophyta</taxon>
        <taxon>Magnoliopsida</taxon>
        <taxon>eudicotyledons</taxon>
        <taxon>Gunneridae</taxon>
        <taxon>Pentapetalae</taxon>
        <taxon>rosids</taxon>
        <taxon>malvids</taxon>
        <taxon>Brassicales</taxon>
        <taxon>Brassicaceae</taxon>
        <taxon>Camelineae</taxon>
        <taxon>Arabidopsis</taxon>
    </lineage>
</organism>
<protein>
    <recommendedName>
        <fullName>Aldehyde dehydrogenase family 3 member H1</fullName>
        <shortName>AtALDH4</shortName>
        <shortName>Ath-ALDH4</shortName>
        <ecNumber>1.2.1.3</ecNumber>
    </recommendedName>
</protein>
<proteinExistence type="evidence at protein level"/>
<name>AL3H1_ARATH</name>
<dbReference type="EC" id="1.2.1.3"/>
<dbReference type="EMBL" id="AC074228">
    <property type="protein sequence ID" value="AAG50550.1"/>
    <property type="molecule type" value="Genomic_DNA"/>
</dbReference>
<dbReference type="EMBL" id="CP002684">
    <property type="protein sequence ID" value="AEE32025.1"/>
    <property type="molecule type" value="Genomic_DNA"/>
</dbReference>
<dbReference type="EMBL" id="CP002684">
    <property type="protein sequence ID" value="AEE32026.1"/>
    <property type="molecule type" value="Genomic_DNA"/>
</dbReference>
<dbReference type="EMBL" id="CP002684">
    <property type="protein sequence ID" value="AEE32027.1"/>
    <property type="molecule type" value="Genomic_DNA"/>
</dbReference>
<dbReference type="EMBL" id="AY072122">
    <property type="protein sequence ID" value="AAL59944.1"/>
    <property type="molecule type" value="mRNA"/>
</dbReference>
<dbReference type="EMBL" id="AY084648">
    <property type="protein sequence ID" value="AAM61211.1"/>
    <property type="molecule type" value="mRNA"/>
</dbReference>
<dbReference type="EMBL" id="AJ585241">
    <property type="protein sequence ID" value="CAE51203.1"/>
    <property type="molecule type" value="mRNA"/>
</dbReference>
<dbReference type="PIR" id="H96505">
    <property type="entry name" value="H96505"/>
</dbReference>
<dbReference type="RefSeq" id="NP_001077676.1">
    <molecule id="Q70DU8-2"/>
    <property type="nucleotide sequence ID" value="NM_001084207.1"/>
</dbReference>
<dbReference type="RefSeq" id="NP_175081.1">
    <molecule id="Q70DU8-1"/>
    <property type="nucleotide sequence ID" value="NM_103541.3"/>
</dbReference>
<dbReference type="RefSeq" id="NP_849770.1">
    <molecule id="Q70DU8-1"/>
    <property type="nucleotide sequence ID" value="NM_179439.4"/>
</dbReference>
<dbReference type="SMR" id="Q70DU8"/>
<dbReference type="FunCoup" id="Q70DU8">
    <property type="interactions" value="2520"/>
</dbReference>
<dbReference type="STRING" id="3702.Q70DU8"/>
<dbReference type="iPTMnet" id="Q70DU8"/>
<dbReference type="PaxDb" id="3702-AT1G44170.2"/>
<dbReference type="ProteomicsDB" id="244811">
    <molecule id="Q70DU8-1"/>
</dbReference>
<dbReference type="EnsemblPlants" id="AT1G44170.1">
    <molecule id="Q70DU8-1"/>
    <property type="protein sequence ID" value="AT1G44170.1"/>
    <property type="gene ID" value="AT1G44170"/>
</dbReference>
<dbReference type="EnsemblPlants" id="AT1G44170.2">
    <molecule id="Q70DU8-1"/>
    <property type="protein sequence ID" value="AT1G44170.2"/>
    <property type="gene ID" value="AT1G44170"/>
</dbReference>
<dbReference type="EnsemblPlants" id="AT1G44170.3">
    <molecule id="Q70DU8-2"/>
    <property type="protein sequence ID" value="AT1G44170.3"/>
    <property type="gene ID" value="AT1G44170"/>
</dbReference>
<dbReference type="GeneID" id="841020"/>
<dbReference type="Gramene" id="AT1G44170.1">
    <molecule id="Q70DU8-1"/>
    <property type="protein sequence ID" value="AT1G44170.1"/>
    <property type="gene ID" value="AT1G44170"/>
</dbReference>
<dbReference type="Gramene" id="AT1G44170.2">
    <molecule id="Q70DU8-1"/>
    <property type="protein sequence ID" value="AT1G44170.2"/>
    <property type="gene ID" value="AT1G44170"/>
</dbReference>
<dbReference type="Gramene" id="AT1G44170.3">
    <molecule id="Q70DU8-2"/>
    <property type="protein sequence ID" value="AT1G44170.3"/>
    <property type="gene ID" value="AT1G44170"/>
</dbReference>
<dbReference type="KEGG" id="ath:AT1G44170"/>
<dbReference type="Araport" id="AT1G44170"/>
<dbReference type="TAIR" id="AT1G44170">
    <property type="gene designation" value="ALDH3H1"/>
</dbReference>
<dbReference type="eggNOG" id="KOG2456">
    <property type="taxonomic scope" value="Eukaryota"/>
</dbReference>
<dbReference type="HOGENOM" id="CLU_005391_3_1_1"/>
<dbReference type="InParanoid" id="Q70DU8"/>
<dbReference type="OMA" id="PLVAYWF"/>
<dbReference type="PhylomeDB" id="Q70DU8"/>
<dbReference type="BioCyc" id="ARA:AT1G44170-MONOMER"/>
<dbReference type="BRENDA" id="1.2.1.3">
    <property type="organism ID" value="399"/>
</dbReference>
<dbReference type="PRO" id="PR:Q70DU8"/>
<dbReference type="Proteomes" id="UP000006548">
    <property type="component" value="Chromosome 1"/>
</dbReference>
<dbReference type="ExpressionAtlas" id="Q70DU8">
    <property type="expression patterns" value="baseline and differential"/>
</dbReference>
<dbReference type="GO" id="GO:0005783">
    <property type="term" value="C:endoplasmic reticulum"/>
    <property type="evidence" value="ECO:0007005"/>
    <property type="project" value="TAIR"/>
</dbReference>
<dbReference type="GO" id="GO:0005794">
    <property type="term" value="C:Golgi apparatus"/>
    <property type="evidence" value="ECO:0007005"/>
    <property type="project" value="TAIR"/>
</dbReference>
<dbReference type="GO" id="GO:0005634">
    <property type="term" value="C:nucleus"/>
    <property type="evidence" value="ECO:0007005"/>
    <property type="project" value="TAIR"/>
</dbReference>
<dbReference type="GO" id="GO:0000325">
    <property type="term" value="C:plant-type vacuole"/>
    <property type="evidence" value="ECO:0007005"/>
    <property type="project" value="TAIR"/>
</dbReference>
<dbReference type="GO" id="GO:0009506">
    <property type="term" value="C:plasmodesma"/>
    <property type="evidence" value="ECO:0007005"/>
    <property type="project" value="TAIR"/>
</dbReference>
<dbReference type="GO" id="GO:0009536">
    <property type="term" value="C:plastid"/>
    <property type="evidence" value="ECO:0000250"/>
    <property type="project" value="TAIR"/>
</dbReference>
<dbReference type="GO" id="GO:0004028">
    <property type="term" value="F:3-chloroallyl aldehyde dehydrogenase activity"/>
    <property type="evidence" value="ECO:0000250"/>
    <property type="project" value="TAIR"/>
</dbReference>
<dbReference type="GO" id="GO:0004029">
    <property type="term" value="F:aldehyde dehydrogenase (NAD+) activity"/>
    <property type="evidence" value="ECO:0000314"/>
    <property type="project" value="TAIR"/>
</dbReference>
<dbReference type="GO" id="GO:0006081">
    <property type="term" value="P:aldehyde metabolic process"/>
    <property type="evidence" value="ECO:0007669"/>
    <property type="project" value="InterPro"/>
</dbReference>
<dbReference type="GO" id="GO:0009737">
    <property type="term" value="P:response to abscisic acid"/>
    <property type="evidence" value="ECO:0000270"/>
    <property type="project" value="TAIR"/>
</dbReference>
<dbReference type="GO" id="GO:0009269">
    <property type="term" value="P:response to desiccation"/>
    <property type="evidence" value="ECO:0000270"/>
    <property type="project" value="TAIR"/>
</dbReference>
<dbReference type="GO" id="GO:0009651">
    <property type="term" value="P:response to salt stress"/>
    <property type="evidence" value="ECO:0000270"/>
    <property type="project" value="TAIR"/>
</dbReference>
<dbReference type="CDD" id="cd07137">
    <property type="entry name" value="ALDH_F3FHI"/>
    <property type="match status" value="1"/>
</dbReference>
<dbReference type="FunFam" id="3.40.309.10:FF:000003">
    <property type="entry name" value="Aldehyde dehydrogenase"/>
    <property type="match status" value="1"/>
</dbReference>
<dbReference type="FunFam" id="3.40.605.10:FF:000004">
    <property type="entry name" value="Aldehyde dehydrogenase"/>
    <property type="match status" value="1"/>
</dbReference>
<dbReference type="Gene3D" id="3.40.605.10">
    <property type="entry name" value="Aldehyde Dehydrogenase, Chain A, domain 1"/>
    <property type="match status" value="1"/>
</dbReference>
<dbReference type="Gene3D" id="3.40.309.10">
    <property type="entry name" value="Aldehyde Dehydrogenase, Chain A, domain 2"/>
    <property type="match status" value="1"/>
</dbReference>
<dbReference type="InterPro" id="IPR016161">
    <property type="entry name" value="Ald_DH/histidinol_DH"/>
</dbReference>
<dbReference type="InterPro" id="IPR016163">
    <property type="entry name" value="Ald_DH_C"/>
</dbReference>
<dbReference type="InterPro" id="IPR029510">
    <property type="entry name" value="Ald_DH_CS_GLU"/>
</dbReference>
<dbReference type="InterPro" id="IPR016162">
    <property type="entry name" value="Ald_DH_N"/>
</dbReference>
<dbReference type="InterPro" id="IPR015590">
    <property type="entry name" value="Aldehyde_DH_dom"/>
</dbReference>
<dbReference type="InterPro" id="IPR012394">
    <property type="entry name" value="Aldehyde_DH_NAD(P)"/>
</dbReference>
<dbReference type="PANTHER" id="PTHR43570">
    <property type="entry name" value="ALDEHYDE DEHYDROGENASE"/>
    <property type="match status" value="1"/>
</dbReference>
<dbReference type="PANTHER" id="PTHR43570:SF16">
    <property type="entry name" value="ALDEHYDE DEHYDROGENASE TYPE III, ISOFORM Q"/>
    <property type="match status" value="1"/>
</dbReference>
<dbReference type="Pfam" id="PF00171">
    <property type="entry name" value="Aldedh"/>
    <property type="match status" value="1"/>
</dbReference>
<dbReference type="PIRSF" id="PIRSF036492">
    <property type="entry name" value="ALDH"/>
    <property type="match status" value="1"/>
</dbReference>
<dbReference type="SUPFAM" id="SSF53720">
    <property type="entry name" value="ALDH-like"/>
    <property type="match status" value="1"/>
</dbReference>
<dbReference type="PROSITE" id="PS00687">
    <property type="entry name" value="ALDEHYDE_DEHYDR_GLU"/>
    <property type="match status" value="1"/>
</dbReference>
<sequence length="484" mass="53159">MAAKKVFGSAEASNLVTELRRSFDDGVTRGYEWRVTQLKKLMIICDNHEPEIVAALRDDLGKPELESSVYEVSLLRNSIKLALKQLKNWMAPEKAKTSLTTFPASAEIVSEPLGVVLVISAWNYPFLLSIDPVIGAISAGNAVVLKPSELAPASSALLTKLLEQYLDPSAVRVVEGAVTETSALLEQKWDKIFYTGSSKIGRVIMAAAAKHLTPVVLELGGKSPVVVDSDTDLKVTVRRIIVGKWGCNNGQACVSPDYILTTKEYAPKLIDAMKLELEKFYGKNPIESKDMSRIVNSNHFDRLSKLLDEKEVSDKIVYGGEKDRENLKIAPTILLDVPLDSLIMSEEIFGPLLPILTLNNLEESFDVIRSRPKPLAAYLFTHNKKLKERFAATVSAGGIVVNDIAVHLALHTLPFGGVGESGMGAYHGKFSFDAFSHKKAVLYRSLFGDSAVRYPPYSRGKLRLLKALVDSNIFDLFKVLLGLA</sequence>
<gene>
    <name type="primary">ALDH3H1</name>
    <name type="synonym">ALDH4</name>
    <name type="ordered locus">At1g44170</name>
    <name type="ORF">T7O23.15</name>
</gene>
<feature type="chain" id="PRO_0000256060" description="Aldehyde dehydrogenase family 3 member H1">
    <location>
        <begin position="1"/>
        <end position="484"/>
    </location>
</feature>
<feature type="active site" description="Proton acceptor" evidence="2">
    <location>
        <position position="218"/>
    </location>
</feature>
<feature type="active site" description="Nucleophile" evidence="2">
    <location>
        <position position="253"/>
    </location>
</feature>
<feature type="binding site" evidence="1">
    <location>
        <begin position="196"/>
        <end position="201"/>
    </location>
    <ligand>
        <name>NAD(+)</name>
        <dbReference type="ChEBI" id="CHEBI:57540"/>
    </ligand>
</feature>
<feature type="site" description="Transition state stabilizer" evidence="1">
    <location>
        <position position="123"/>
    </location>
</feature>
<feature type="disulfide bond" description="Interchain">
    <location>
        <position position="45"/>
    </location>
</feature>
<feature type="splice variant" id="VSP_054869" description="In isoform beta." evidence="8">
    <original>MAAKKVFGSAEASNLVTELRRSFDDGVTRGYEWRVTQLKKLMIICDNHEPEIVAALRDDLGKPELESSVYE</original>
    <variation>MFYQQRVL</variation>
    <location>
        <begin position="1"/>
        <end position="71"/>
    </location>
</feature>
<feature type="mutagenesis site" description="Decreased solubility, loss of dimerization and strongly decreased activity." evidence="5">
    <original>C</original>
    <variation>S</variation>
    <location>
        <position position="45"/>
    </location>
</feature>
<feature type="mutagenesis site" description="Small effect on NAD(+) interaction, but 40% loss of efficiency. Ability to use NADP(+). 70% loss of efficiency with NAD(+); when associated with V-200. Impaired affinity for both cofactors and decreased catalytic efficiency; when associated with G-200." evidence="7">
    <original>E</original>
    <variation>D</variation>
    <location>
        <position position="149"/>
    </location>
</feature>
<feature type="mutagenesis site" description="Ability to use NADP(+) and 33% decreased efficiency with NAD(+). 70% loss of efficiency with NAD(+); when associated with V-200. Impaired affinity for both cofactors and decreased catalytic efficiency; when associated with G-200." evidence="7">
    <original>E</original>
    <variation>N</variation>
    <location>
        <position position="149"/>
    </location>
</feature>
<feature type="mutagenesis site" description="Loss of specificity for NAD(+) and loss of 25% efficiency. 15% efficiency with NAD(+); when associated with V-200. Impaired affinity for both cofactors and decreased catalytic efficiency; when associated with G-200." evidence="7">
    <original>E</original>
    <variation>Q</variation>
    <location>
        <position position="149"/>
    </location>
</feature>
<feature type="mutagenesis site" description="Loss of specificity and increased NADP(+) binding. Decreased catalytic efficiency. Loss of cofactor specificity and same lower efficiency with both; when associated with V-200. Impaired affinity for both cofactors and decreased catalytic efficiency; when associated with G-200. Changed coenzyme preference from NAD(+) to NADP(+), but no effect on the catalytic efficiency; when associated with R-178 and V-200." evidence="7">
    <original>E</original>
    <variation>T</variation>
    <location>
        <position position="149"/>
    </location>
</feature>
<feature type="mutagenesis site" description="Changed coenzyme preference from NAD(+) to NADP(+), but no effect on the catalytic efficiency; when associated with T-149 and V-200." evidence="7">
    <original>V</original>
    <variation>R</variation>
    <location>
        <position position="178"/>
    </location>
</feature>
<feature type="mutagenesis site" description="Changed coenzyme preference from NAD(+) to NADP(+), but impaired affinities for both cofactors. No effect on the interaction with the substrate. Impaired affinities for both cofactors and decreased catalytic efficiencies; when associated with D-149, Q-149, N-149 or T-149." evidence="5 7">
    <original>I</original>
    <variation>G</variation>
    <location>
        <position position="200"/>
    </location>
</feature>
<feature type="mutagenesis site" description="Also able to use NADP(+) as coenzyme, but no effect on the interaction with the substrate. 15% efficiency with NAD(+); when associated with Q-149. 70% loss of efficiency with NAD(+); when associated with D-149 or N-149. Loss of cofactor specificity and same lower efficiency with both; when associated with T-149. Changed coenzyme preference from NAD(+) to NADP(+), but no effect on the catalytic efficiency; when associated with T-149 and R-178." evidence="5 7">
    <original>I</original>
    <variation>V</variation>
    <location>
        <position position="200"/>
    </location>
</feature>
<feature type="mutagenesis site" description="No effect on solubility, but 10% loss of activity." evidence="5">
    <original>C</original>
    <variation>S</variation>
    <location>
        <position position="247"/>
    </location>
</feature>
<feature type="mutagenesis site" description="No effect on solubility, but loss of activity." evidence="5">
    <original>C</original>
    <variation>S</variation>
    <location>
        <position position="253"/>
    </location>
</feature>
<feature type="sequence conflict" description="In Ref. 5; CAE51203." evidence="8" ref="5">
    <original>I</original>
    <variation>V</variation>
    <location>
        <position position="200"/>
    </location>
</feature>
<feature type="sequence conflict" description="In Ref. 5; CAE51203." evidence="8" ref="5">
    <original>A</original>
    <variation>D</variation>
    <location>
        <position position="272"/>
    </location>
</feature>
<feature type="sequence conflict" description="In Ref. 5; CAE51203." evidence="8" ref="5">
    <original>F</original>
    <variation>L</variation>
    <location>
        <position position="300"/>
    </location>
</feature>
<feature type="sequence conflict" description="In Ref. 4; AAM61211." evidence="8" ref="4">
    <original>A</original>
    <variation>T</variation>
    <location>
        <position position="391"/>
    </location>
</feature>
<feature type="sequence conflict" description="In Ref. 5; CAE51203." evidence="8" ref="5">
    <original>F</original>
    <variation>S</variation>
    <location>
        <position position="435"/>
    </location>
</feature>
<reference key="1">
    <citation type="journal article" date="2000" name="Nature">
        <title>Sequence and analysis of chromosome 1 of the plant Arabidopsis thaliana.</title>
        <authorList>
            <person name="Theologis A."/>
            <person name="Ecker J.R."/>
            <person name="Palm C.J."/>
            <person name="Federspiel N.A."/>
            <person name="Kaul S."/>
            <person name="White O."/>
            <person name="Alonso J."/>
            <person name="Altafi H."/>
            <person name="Araujo R."/>
            <person name="Bowman C.L."/>
            <person name="Brooks S.Y."/>
            <person name="Buehler E."/>
            <person name="Chan A."/>
            <person name="Chao Q."/>
            <person name="Chen H."/>
            <person name="Cheuk R.F."/>
            <person name="Chin C.W."/>
            <person name="Chung M.K."/>
            <person name="Conn L."/>
            <person name="Conway A.B."/>
            <person name="Conway A.R."/>
            <person name="Creasy T.H."/>
            <person name="Dewar K."/>
            <person name="Dunn P."/>
            <person name="Etgu P."/>
            <person name="Feldblyum T.V."/>
            <person name="Feng J.-D."/>
            <person name="Fong B."/>
            <person name="Fujii C.Y."/>
            <person name="Gill J.E."/>
            <person name="Goldsmith A.D."/>
            <person name="Haas B."/>
            <person name="Hansen N.F."/>
            <person name="Hughes B."/>
            <person name="Huizar L."/>
            <person name="Hunter J.L."/>
            <person name="Jenkins J."/>
            <person name="Johnson-Hopson C."/>
            <person name="Khan S."/>
            <person name="Khaykin E."/>
            <person name="Kim C.J."/>
            <person name="Koo H.L."/>
            <person name="Kremenetskaia I."/>
            <person name="Kurtz D.B."/>
            <person name="Kwan A."/>
            <person name="Lam B."/>
            <person name="Langin-Hooper S."/>
            <person name="Lee A."/>
            <person name="Lee J.M."/>
            <person name="Lenz C.A."/>
            <person name="Li J.H."/>
            <person name="Li Y.-P."/>
            <person name="Lin X."/>
            <person name="Liu S.X."/>
            <person name="Liu Z.A."/>
            <person name="Luros J.S."/>
            <person name="Maiti R."/>
            <person name="Marziali A."/>
            <person name="Militscher J."/>
            <person name="Miranda M."/>
            <person name="Nguyen M."/>
            <person name="Nierman W.C."/>
            <person name="Osborne B.I."/>
            <person name="Pai G."/>
            <person name="Peterson J."/>
            <person name="Pham P.K."/>
            <person name="Rizzo M."/>
            <person name="Rooney T."/>
            <person name="Rowley D."/>
            <person name="Sakano H."/>
            <person name="Salzberg S.L."/>
            <person name="Schwartz J.R."/>
            <person name="Shinn P."/>
            <person name="Southwick A.M."/>
            <person name="Sun H."/>
            <person name="Tallon L.J."/>
            <person name="Tambunga G."/>
            <person name="Toriumi M.J."/>
            <person name="Town C.D."/>
            <person name="Utterback T."/>
            <person name="Van Aken S."/>
            <person name="Vaysberg M."/>
            <person name="Vysotskaia V.S."/>
            <person name="Walker M."/>
            <person name="Wu D."/>
            <person name="Yu G."/>
            <person name="Fraser C.M."/>
            <person name="Venter J.C."/>
            <person name="Davis R.W."/>
        </authorList>
    </citation>
    <scope>NUCLEOTIDE SEQUENCE [LARGE SCALE GENOMIC DNA]</scope>
    <source>
        <strain>cv. Columbia</strain>
    </source>
</reference>
<reference key="2">
    <citation type="journal article" date="2017" name="Plant J.">
        <title>Araport11: a complete reannotation of the Arabidopsis thaliana reference genome.</title>
        <authorList>
            <person name="Cheng C.Y."/>
            <person name="Krishnakumar V."/>
            <person name="Chan A.P."/>
            <person name="Thibaud-Nissen F."/>
            <person name="Schobel S."/>
            <person name="Town C.D."/>
        </authorList>
    </citation>
    <scope>GENOME REANNOTATION</scope>
    <source>
        <strain>cv. Columbia</strain>
    </source>
</reference>
<reference key="3">
    <citation type="journal article" date="2003" name="Science">
        <title>Empirical analysis of transcriptional activity in the Arabidopsis genome.</title>
        <authorList>
            <person name="Yamada K."/>
            <person name="Lim J."/>
            <person name="Dale J.M."/>
            <person name="Chen H."/>
            <person name="Shinn P."/>
            <person name="Palm C.J."/>
            <person name="Southwick A.M."/>
            <person name="Wu H.C."/>
            <person name="Kim C.J."/>
            <person name="Nguyen M."/>
            <person name="Pham P.K."/>
            <person name="Cheuk R.F."/>
            <person name="Karlin-Newmann G."/>
            <person name="Liu S.X."/>
            <person name="Lam B."/>
            <person name="Sakano H."/>
            <person name="Wu T."/>
            <person name="Yu G."/>
            <person name="Miranda M."/>
            <person name="Quach H.L."/>
            <person name="Tripp M."/>
            <person name="Chang C.H."/>
            <person name="Lee J.M."/>
            <person name="Toriumi M.J."/>
            <person name="Chan M.M."/>
            <person name="Tang C.C."/>
            <person name="Onodera C.S."/>
            <person name="Deng J.M."/>
            <person name="Akiyama K."/>
            <person name="Ansari Y."/>
            <person name="Arakawa T."/>
            <person name="Banh J."/>
            <person name="Banno F."/>
            <person name="Bowser L."/>
            <person name="Brooks S.Y."/>
            <person name="Carninci P."/>
            <person name="Chao Q."/>
            <person name="Choy N."/>
            <person name="Enju A."/>
            <person name="Goldsmith A.D."/>
            <person name="Gurjal M."/>
            <person name="Hansen N.F."/>
            <person name="Hayashizaki Y."/>
            <person name="Johnson-Hopson C."/>
            <person name="Hsuan V.W."/>
            <person name="Iida K."/>
            <person name="Karnes M."/>
            <person name="Khan S."/>
            <person name="Koesema E."/>
            <person name="Ishida J."/>
            <person name="Jiang P.X."/>
            <person name="Jones T."/>
            <person name="Kawai J."/>
            <person name="Kamiya A."/>
            <person name="Meyers C."/>
            <person name="Nakajima M."/>
            <person name="Narusaka M."/>
            <person name="Seki M."/>
            <person name="Sakurai T."/>
            <person name="Satou M."/>
            <person name="Tamse R."/>
            <person name="Vaysberg M."/>
            <person name="Wallender E.K."/>
            <person name="Wong C."/>
            <person name="Yamamura Y."/>
            <person name="Yuan S."/>
            <person name="Shinozaki K."/>
            <person name="Davis R.W."/>
            <person name="Theologis A."/>
            <person name="Ecker J.R."/>
        </authorList>
    </citation>
    <scope>NUCLEOTIDE SEQUENCE [LARGE SCALE MRNA] (ISOFORM ALPHA)</scope>
    <source>
        <strain>cv. Columbia</strain>
    </source>
</reference>
<reference key="4">
    <citation type="submission" date="2002-03" db="EMBL/GenBank/DDBJ databases">
        <title>Full-length cDNA from Arabidopsis thaliana.</title>
        <authorList>
            <person name="Brover V.V."/>
            <person name="Troukhan M.E."/>
            <person name="Alexandrov N.A."/>
            <person name="Lu Y.-P."/>
            <person name="Flavell R.B."/>
            <person name="Feldmann K.A."/>
        </authorList>
    </citation>
    <scope>NUCLEOTIDE SEQUENCE [LARGE SCALE MRNA] (ISOFORM ALPHA)</scope>
</reference>
<reference key="5">
    <citation type="journal article" date="2005" name="Plant Mol. Biol.">
        <title>Detailed expression analysis of selected genes of the aldehyde dehydrogenase(ALDH) gene superfamily in Arabidopsis thaliana.</title>
        <authorList>
            <person name="Kirch H.-H."/>
            <person name="Schlingensiepen S."/>
            <person name="Kotchoni S."/>
            <person name="Sunkar R."/>
            <person name="Bartels D."/>
        </authorList>
    </citation>
    <scope>NUCLEOTIDE SEQUENCE [MRNA] OF 5-484 (ISOFORM ALPHA)</scope>
    <scope>INDUCTION</scope>
</reference>
<reference key="6">
    <citation type="journal article" date="2001" name="Plant J.">
        <title>Novel ABA- and dehydration-inducible aldehyde dehydrogenase genes isolated from the resurrection plant Craterostigma plantagineum and Arabidopsis thaliana.</title>
        <authorList>
            <person name="Kirch H.-H."/>
            <person name="Nair A."/>
            <person name="Bartels D."/>
        </authorList>
    </citation>
    <scope>IDENTIFICATION</scope>
    <scope>INDUCTION</scope>
</reference>
<reference key="7">
    <citation type="journal article" date="2004" name="Trends Plant Sci.">
        <title>The ALDH gene superfamily of Arabidopsis.</title>
        <authorList>
            <person name="Kirch H.-H."/>
            <person name="Bartels D."/>
            <person name="Wei Y."/>
            <person name="Schnable P.S."/>
            <person name="Wood A.J."/>
        </authorList>
    </citation>
    <scope>NOMENCLATURE</scope>
</reference>
<reference key="8">
    <citation type="journal article" date="2011" name="Biochem. J.">
        <title>Engineering the nucleotide coenzyme specificity and sulfhydryl redox sensitivity of two stress-responsive aldehyde dehydrogenase isoenzymes of Arabidopsis thaliana.</title>
        <authorList>
            <person name="Stiti N."/>
            <person name="Adewale I.O."/>
            <person name="Petersen J."/>
            <person name="Bartels D."/>
            <person name="Kirch H.H."/>
        </authorList>
    </citation>
    <scope>FUNCTION</scope>
    <scope>CATALYTIC ACTIVITY</scope>
    <scope>BIOPHYSICOCHEMICAL PROPERTIES</scope>
    <scope>SUBUNIT</scope>
    <scope>MUTAGENESIS OF CYS-45; ILE-200; CYS-247 AND CYS-253</scope>
    <scope>ACTIVITY REGULATION</scope>
    <scope>3D-STRUCTURE MODELING</scope>
</reference>
<reference key="9">
    <citation type="journal article" date="2012" name="J. Exp. Bot.">
        <title>T-DNA insertion mutants reveal complex expression patterns of the aldehyde dehydrogenase 3H1 locus in Arabidopsis thaliana.</title>
        <authorList>
            <person name="Missihoun T.D."/>
            <person name="Kirch H.H."/>
            <person name="Bartels D."/>
        </authorList>
    </citation>
    <scope>ALTERNATIVE SPLICING</scope>
    <scope>TISSUE SPECIFICITY</scope>
    <scope>INDUCTION</scope>
    <scope>DISRUPTION PHENOTYPE</scope>
    <source>
        <strain>cv. Columbia</strain>
    </source>
</reference>
<reference key="10">
    <citation type="journal article" date="2014" name="Biochim. Biophys. Acta">
        <title>Aldehyde dehydrogenase enzyme ALDH3H1 from Arabidopsis thaliana: Identification of amino acid residues critical for cofactor specificity.</title>
        <authorList>
            <person name="Stiti N."/>
            <person name="Podgorska K."/>
            <person name="Bartels D."/>
        </authorList>
    </citation>
    <scope>3D-STRUCTURE MODELING</scope>
    <scope>MUTAGENESIS OF GLU-149; VAL-178 AND ILE-200</scope>
</reference>